<keyword id="KW-0963">Cytoplasm</keyword>
<keyword id="KW-0648">Protein biosynthesis</keyword>
<keyword id="KW-1185">Reference proteome</keyword>
<organism>
    <name type="scientific">Nitrosospira multiformis (strain ATCC 25196 / NCIMB 11849 / C 71)</name>
    <dbReference type="NCBI Taxonomy" id="323848"/>
    <lineage>
        <taxon>Bacteria</taxon>
        <taxon>Pseudomonadati</taxon>
        <taxon>Pseudomonadota</taxon>
        <taxon>Betaproteobacteria</taxon>
        <taxon>Nitrosomonadales</taxon>
        <taxon>Nitrosomonadaceae</taxon>
        <taxon>Nitrosospira</taxon>
    </lineage>
</organism>
<reference key="1">
    <citation type="submission" date="2005-08" db="EMBL/GenBank/DDBJ databases">
        <title>Complete sequence of chromosome 1 of Nitrosospira multiformis ATCC 25196.</title>
        <authorList>
            <person name="Copeland A."/>
            <person name="Lucas S."/>
            <person name="Lapidus A."/>
            <person name="Barry K."/>
            <person name="Detter J.C."/>
            <person name="Glavina T."/>
            <person name="Hammon N."/>
            <person name="Israni S."/>
            <person name="Pitluck S."/>
            <person name="Chain P."/>
            <person name="Malfatti S."/>
            <person name="Shin M."/>
            <person name="Vergez L."/>
            <person name="Schmutz J."/>
            <person name="Larimer F."/>
            <person name="Land M."/>
            <person name="Hauser L."/>
            <person name="Kyrpides N."/>
            <person name="Lykidis A."/>
            <person name="Richardson P."/>
        </authorList>
    </citation>
    <scope>NUCLEOTIDE SEQUENCE [LARGE SCALE GENOMIC DNA]</scope>
    <source>
        <strain>ATCC 25196 / NCIMB 11849 / C 71</strain>
    </source>
</reference>
<protein>
    <recommendedName>
        <fullName evidence="1">Ribosome-recycling factor</fullName>
        <shortName evidence="1">RRF</shortName>
    </recommendedName>
    <alternativeName>
        <fullName evidence="1">Ribosome-releasing factor</fullName>
    </alternativeName>
</protein>
<dbReference type="EMBL" id="CP000103">
    <property type="protein sequence ID" value="ABB73967.1"/>
    <property type="molecule type" value="Genomic_DNA"/>
</dbReference>
<dbReference type="RefSeq" id="WP_011380017.1">
    <property type="nucleotide sequence ID" value="NC_007614.1"/>
</dbReference>
<dbReference type="SMR" id="Q2YBA4"/>
<dbReference type="STRING" id="323848.Nmul_A0660"/>
<dbReference type="KEGG" id="nmu:Nmul_A0660"/>
<dbReference type="eggNOG" id="COG0233">
    <property type="taxonomic scope" value="Bacteria"/>
</dbReference>
<dbReference type="HOGENOM" id="CLU_073981_2_0_4"/>
<dbReference type="OrthoDB" id="9804006at2"/>
<dbReference type="Proteomes" id="UP000002718">
    <property type="component" value="Chromosome"/>
</dbReference>
<dbReference type="GO" id="GO:0005829">
    <property type="term" value="C:cytosol"/>
    <property type="evidence" value="ECO:0007669"/>
    <property type="project" value="GOC"/>
</dbReference>
<dbReference type="GO" id="GO:0043023">
    <property type="term" value="F:ribosomal large subunit binding"/>
    <property type="evidence" value="ECO:0007669"/>
    <property type="project" value="TreeGrafter"/>
</dbReference>
<dbReference type="GO" id="GO:0002184">
    <property type="term" value="P:cytoplasmic translational termination"/>
    <property type="evidence" value="ECO:0007669"/>
    <property type="project" value="TreeGrafter"/>
</dbReference>
<dbReference type="CDD" id="cd00520">
    <property type="entry name" value="RRF"/>
    <property type="match status" value="1"/>
</dbReference>
<dbReference type="FunFam" id="1.10.132.20:FF:000001">
    <property type="entry name" value="Ribosome-recycling factor"/>
    <property type="match status" value="1"/>
</dbReference>
<dbReference type="FunFam" id="3.30.1360.40:FF:000001">
    <property type="entry name" value="Ribosome-recycling factor"/>
    <property type="match status" value="1"/>
</dbReference>
<dbReference type="Gene3D" id="3.30.1360.40">
    <property type="match status" value="1"/>
</dbReference>
<dbReference type="Gene3D" id="1.10.132.20">
    <property type="entry name" value="Ribosome-recycling factor"/>
    <property type="match status" value="1"/>
</dbReference>
<dbReference type="HAMAP" id="MF_00040">
    <property type="entry name" value="RRF"/>
    <property type="match status" value="1"/>
</dbReference>
<dbReference type="InterPro" id="IPR002661">
    <property type="entry name" value="Ribosome_recyc_fac"/>
</dbReference>
<dbReference type="InterPro" id="IPR023584">
    <property type="entry name" value="Ribosome_recyc_fac_dom"/>
</dbReference>
<dbReference type="InterPro" id="IPR036191">
    <property type="entry name" value="RRF_sf"/>
</dbReference>
<dbReference type="NCBIfam" id="TIGR00496">
    <property type="entry name" value="frr"/>
    <property type="match status" value="1"/>
</dbReference>
<dbReference type="PANTHER" id="PTHR20982:SF3">
    <property type="entry name" value="MITOCHONDRIAL RIBOSOME RECYCLING FACTOR PSEUDO 1"/>
    <property type="match status" value="1"/>
</dbReference>
<dbReference type="PANTHER" id="PTHR20982">
    <property type="entry name" value="RIBOSOME RECYCLING FACTOR"/>
    <property type="match status" value="1"/>
</dbReference>
<dbReference type="Pfam" id="PF01765">
    <property type="entry name" value="RRF"/>
    <property type="match status" value="1"/>
</dbReference>
<dbReference type="SUPFAM" id="SSF55194">
    <property type="entry name" value="Ribosome recycling factor, RRF"/>
    <property type="match status" value="1"/>
</dbReference>
<sequence>MIAEIKKSAEQKMQKSLEALKLDLGKIRTGRAHTGLLDHVTVDYYGNPTAINQVANISLADARTITVAPWEKKMLGAIEKAIRNSDLGLNPTTVGELIRVPMPPLTEERRRDLTKVVKHEGEAARVAMRNIRRDANAHLKDLLKEKKIAEDEERKGQEDIQKLTDRYIADIDKLLQAKEAELMAV</sequence>
<name>RRF_NITMU</name>
<comment type="function">
    <text evidence="1">Responsible for the release of ribosomes from messenger RNA at the termination of protein biosynthesis. May increase the efficiency of translation by recycling ribosomes from one round of translation to another.</text>
</comment>
<comment type="subcellular location">
    <subcellularLocation>
        <location evidence="1">Cytoplasm</location>
    </subcellularLocation>
</comment>
<comment type="similarity">
    <text evidence="1">Belongs to the RRF family.</text>
</comment>
<evidence type="ECO:0000255" key="1">
    <source>
        <dbReference type="HAMAP-Rule" id="MF_00040"/>
    </source>
</evidence>
<feature type="chain" id="PRO_1000003211" description="Ribosome-recycling factor">
    <location>
        <begin position="1"/>
        <end position="185"/>
    </location>
</feature>
<proteinExistence type="inferred from homology"/>
<accession>Q2YBA4</accession>
<gene>
    <name evidence="1" type="primary">frr</name>
    <name type="ordered locus">Nmul_A0660</name>
</gene>